<name>RS15_PSYIN</name>
<feature type="chain" id="PRO_1000054850" description="Small ribosomal subunit protein uS15">
    <location>
        <begin position="1"/>
        <end position="89"/>
    </location>
</feature>
<gene>
    <name evidence="1" type="primary">rpsO</name>
    <name type="ordered locus">Ping_0824</name>
</gene>
<evidence type="ECO:0000255" key="1">
    <source>
        <dbReference type="HAMAP-Rule" id="MF_01343"/>
    </source>
</evidence>
<evidence type="ECO:0000305" key="2"/>
<accession>A1ST52</accession>
<comment type="function">
    <text evidence="1">One of the primary rRNA binding proteins, it binds directly to 16S rRNA where it helps nucleate assembly of the platform of the 30S subunit by binding and bridging several RNA helices of the 16S rRNA.</text>
</comment>
<comment type="function">
    <text evidence="1">Forms an intersubunit bridge (bridge B4) with the 23S rRNA of the 50S subunit in the ribosome.</text>
</comment>
<comment type="subunit">
    <text evidence="1">Part of the 30S ribosomal subunit. Forms a bridge to the 50S subunit in the 70S ribosome, contacting the 23S rRNA.</text>
</comment>
<comment type="similarity">
    <text evidence="1">Belongs to the universal ribosomal protein uS15 family.</text>
</comment>
<protein>
    <recommendedName>
        <fullName evidence="1">Small ribosomal subunit protein uS15</fullName>
    </recommendedName>
    <alternativeName>
        <fullName evidence="2">30S ribosomal protein S15</fullName>
    </alternativeName>
</protein>
<reference key="1">
    <citation type="journal article" date="2008" name="BMC Genomics">
        <title>Genomics of an extreme psychrophile, Psychromonas ingrahamii.</title>
        <authorList>
            <person name="Riley M."/>
            <person name="Staley J.T."/>
            <person name="Danchin A."/>
            <person name="Wang T.Z."/>
            <person name="Brettin T.S."/>
            <person name="Hauser L.J."/>
            <person name="Land M.L."/>
            <person name="Thompson L.S."/>
        </authorList>
    </citation>
    <scope>NUCLEOTIDE SEQUENCE [LARGE SCALE GENOMIC DNA]</scope>
    <source>
        <strain>DSM 17664 / CCUG 51855 / 37</strain>
    </source>
</reference>
<dbReference type="EMBL" id="CP000510">
    <property type="protein sequence ID" value="ABM02667.1"/>
    <property type="molecule type" value="Genomic_DNA"/>
</dbReference>
<dbReference type="RefSeq" id="WP_011769230.1">
    <property type="nucleotide sequence ID" value="NC_008709.1"/>
</dbReference>
<dbReference type="SMR" id="A1ST52"/>
<dbReference type="STRING" id="357804.Ping_0824"/>
<dbReference type="KEGG" id="pin:Ping_0824"/>
<dbReference type="eggNOG" id="COG0184">
    <property type="taxonomic scope" value="Bacteria"/>
</dbReference>
<dbReference type="HOGENOM" id="CLU_148518_0_0_6"/>
<dbReference type="OrthoDB" id="9799262at2"/>
<dbReference type="Proteomes" id="UP000000639">
    <property type="component" value="Chromosome"/>
</dbReference>
<dbReference type="GO" id="GO:0022627">
    <property type="term" value="C:cytosolic small ribosomal subunit"/>
    <property type="evidence" value="ECO:0007669"/>
    <property type="project" value="TreeGrafter"/>
</dbReference>
<dbReference type="GO" id="GO:0019843">
    <property type="term" value="F:rRNA binding"/>
    <property type="evidence" value="ECO:0007669"/>
    <property type="project" value="UniProtKB-UniRule"/>
</dbReference>
<dbReference type="GO" id="GO:0003735">
    <property type="term" value="F:structural constituent of ribosome"/>
    <property type="evidence" value="ECO:0007669"/>
    <property type="project" value="InterPro"/>
</dbReference>
<dbReference type="GO" id="GO:0006412">
    <property type="term" value="P:translation"/>
    <property type="evidence" value="ECO:0007669"/>
    <property type="project" value="UniProtKB-UniRule"/>
</dbReference>
<dbReference type="CDD" id="cd00353">
    <property type="entry name" value="Ribosomal_S15p_S13e"/>
    <property type="match status" value="1"/>
</dbReference>
<dbReference type="FunFam" id="1.10.287.10:FF:000002">
    <property type="entry name" value="30S ribosomal protein S15"/>
    <property type="match status" value="1"/>
</dbReference>
<dbReference type="Gene3D" id="6.10.250.3130">
    <property type="match status" value="1"/>
</dbReference>
<dbReference type="Gene3D" id="1.10.287.10">
    <property type="entry name" value="S15/NS1, RNA-binding"/>
    <property type="match status" value="1"/>
</dbReference>
<dbReference type="HAMAP" id="MF_01343_B">
    <property type="entry name" value="Ribosomal_uS15_B"/>
    <property type="match status" value="1"/>
</dbReference>
<dbReference type="InterPro" id="IPR000589">
    <property type="entry name" value="Ribosomal_uS15"/>
</dbReference>
<dbReference type="InterPro" id="IPR005290">
    <property type="entry name" value="Ribosomal_uS15_bac-type"/>
</dbReference>
<dbReference type="InterPro" id="IPR009068">
    <property type="entry name" value="uS15_NS1_RNA-bd_sf"/>
</dbReference>
<dbReference type="NCBIfam" id="TIGR00952">
    <property type="entry name" value="S15_bact"/>
    <property type="match status" value="1"/>
</dbReference>
<dbReference type="PANTHER" id="PTHR23321">
    <property type="entry name" value="RIBOSOMAL PROTEIN S15, BACTERIAL AND ORGANELLAR"/>
    <property type="match status" value="1"/>
</dbReference>
<dbReference type="PANTHER" id="PTHR23321:SF26">
    <property type="entry name" value="SMALL RIBOSOMAL SUBUNIT PROTEIN US15M"/>
    <property type="match status" value="1"/>
</dbReference>
<dbReference type="Pfam" id="PF00312">
    <property type="entry name" value="Ribosomal_S15"/>
    <property type="match status" value="1"/>
</dbReference>
<dbReference type="SMART" id="SM01387">
    <property type="entry name" value="Ribosomal_S15"/>
    <property type="match status" value="1"/>
</dbReference>
<dbReference type="SUPFAM" id="SSF47060">
    <property type="entry name" value="S15/NS1 RNA-binding domain"/>
    <property type="match status" value="1"/>
</dbReference>
<dbReference type="PROSITE" id="PS00362">
    <property type="entry name" value="RIBOSOMAL_S15"/>
    <property type="match status" value="1"/>
</dbReference>
<proteinExistence type="inferred from homology"/>
<keyword id="KW-1185">Reference proteome</keyword>
<keyword id="KW-0687">Ribonucleoprotein</keyword>
<keyword id="KW-0689">Ribosomal protein</keyword>
<keyword id="KW-0694">RNA-binding</keyword>
<keyword id="KW-0699">rRNA-binding</keyword>
<sequence length="89" mass="10186">MSLSAEQKAEIVAKYGRSENDTGSSEVQAALYTAQIDHLQGHFKEHIHDHHSRRGLLRMVSQRRKLLDYLKRKDVAAYTALIAELGLRR</sequence>
<organism>
    <name type="scientific">Psychromonas ingrahamii (strain DSM 17664 / CCUG 51855 / 37)</name>
    <dbReference type="NCBI Taxonomy" id="357804"/>
    <lineage>
        <taxon>Bacteria</taxon>
        <taxon>Pseudomonadati</taxon>
        <taxon>Pseudomonadota</taxon>
        <taxon>Gammaproteobacteria</taxon>
        <taxon>Alteromonadales</taxon>
        <taxon>Psychromonadaceae</taxon>
        <taxon>Psychromonas</taxon>
    </lineage>
</organism>